<feature type="chain" id="PRO_1000010887" description="Elongation factor P">
    <location>
        <begin position="1"/>
        <end position="186"/>
    </location>
</feature>
<proteinExistence type="inferred from homology"/>
<protein>
    <recommendedName>
        <fullName evidence="1">Elongation factor P</fullName>
        <shortName evidence="1">EF-P</shortName>
    </recommendedName>
</protein>
<gene>
    <name evidence="1" type="primary">efp</name>
    <name type="ordered locus">Syncc9902_0029</name>
</gene>
<accession>Q3B0X4</accession>
<sequence>MISSNDFRTGTSIEIDGAVWRVVEFLHVKPGKGSAFVRTKLKSVKNGSVVEKTFRAGEMLPQALLEKSSLQHTYMEGDDYVFMDMSSYEETRLTAAQIGDSRKYLKEGMEVNVVSWNDTPLEVELPNSVVLEIKETDPGVKGDTATGGTKPAILETGAQVMVPLFLSIGEKIKVDTRNDSYLGREN</sequence>
<evidence type="ECO:0000255" key="1">
    <source>
        <dbReference type="HAMAP-Rule" id="MF_00141"/>
    </source>
</evidence>
<keyword id="KW-0963">Cytoplasm</keyword>
<keyword id="KW-0251">Elongation factor</keyword>
<keyword id="KW-0648">Protein biosynthesis</keyword>
<keyword id="KW-1185">Reference proteome</keyword>
<dbReference type="EMBL" id="CP000097">
    <property type="protein sequence ID" value="ABB25004.1"/>
    <property type="molecule type" value="Genomic_DNA"/>
</dbReference>
<dbReference type="RefSeq" id="WP_009788525.1">
    <property type="nucleotide sequence ID" value="NC_007513.1"/>
</dbReference>
<dbReference type="SMR" id="Q3B0X4"/>
<dbReference type="STRING" id="316279.Syncc9902_0029"/>
<dbReference type="KEGG" id="sye:Syncc9902_0029"/>
<dbReference type="eggNOG" id="COG0231">
    <property type="taxonomic scope" value="Bacteria"/>
</dbReference>
<dbReference type="HOGENOM" id="CLU_074944_0_1_3"/>
<dbReference type="OrthoDB" id="9801844at2"/>
<dbReference type="UniPathway" id="UPA00345"/>
<dbReference type="Proteomes" id="UP000002712">
    <property type="component" value="Chromosome"/>
</dbReference>
<dbReference type="GO" id="GO:0005737">
    <property type="term" value="C:cytoplasm"/>
    <property type="evidence" value="ECO:0007669"/>
    <property type="project" value="UniProtKB-SubCell"/>
</dbReference>
<dbReference type="GO" id="GO:0003746">
    <property type="term" value="F:translation elongation factor activity"/>
    <property type="evidence" value="ECO:0007669"/>
    <property type="project" value="UniProtKB-UniRule"/>
</dbReference>
<dbReference type="GO" id="GO:0043043">
    <property type="term" value="P:peptide biosynthetic process"/>
    <property type="evidence" value="ECO:0007669"/>
    <property type="project" value="InterPro"/>
</dbReference>
<dbReference type="CDD" id="cd04470">
    <property type="entry name" value="S1_EF-P_repeat_1"/>
    <property type="match status" value="1"/>
</dbReference>
<dbReference type="CDD" id="cd05794">
    <property type="entry name" value="S1_EF-P_repeat_2"/>
    <property type="match status" value="1"/>
</dbReference>
<dbReference type="FunFam" id="2.30.30.30:FF:000003">
    <property type="entry name" value="Elongation factor P"/>
    <property type="match status" value="1"/>
</dbReference>
<dbReference type="FunFam" id="2.40.50.140:FF:000004">
    <property type="entry name" value="Elongation factor P"/>
    <property type="match status" value="1"/>
</dbReference>
<dbReference type="FunFam" id="2.40.50.140:FF:000009">
    <property type="entry name" value="Elongation factor P"/>
    <property type="match status" value="1"/>
</dbReference>
<dbReference type="Gene3D" id="2.30.30.30">
    <property type="match status" value="1"/>
</dbReference>
<dbReference type="Gene3D" id="2.40.50.140">
    <property type="entry name" value="Nucleic acid-binding proteins"/>
    <property type="match status" value="2"/>
</dbReference>
<dbReference type="HAMAP" id="MF_00141">
    <property type="entry name" value="EF_P"/>
    <property type="match status" value="1"/>
</dbReference>
<dbReference type="InterPro" id="IPR015365">
    <property type="entry name" value="Elong-fact-P_C"/>
</dbReference>
<dbReference type="InterPro" id="IPR012340">
    <property type="entry name" value="NA-bd_OB-fold"/>
</dbReference>
<dbReference type="InterPro" id="IPR014722">
    <property type="entry name" value="Rib_uL2_dom2"/>
</dbReference>
<dbReference type="InterPro" id="IPR020599">
    <property type="entry name" value="Transl_elong_fac_P/YeiP"/>
</dbReference>
<dbReference type="InterPro" id="IPR013185">
    <property type="entry name" value="Transl_elong_KOW-like"/>
</dbReference>
<dbReference type="InterPro" id="IPR001059">
    <property type="entry name" value="Transl_elong_P/YeiP_cen"/>
</dbReference>
<dbReference type="InterPro" id="IPR013852">
    <property type="entry name" value="Transl_elong_P/YeiP_CS"/>
</dbReference>
<dbReference type="InterPro" id="IPR011768">
    <property type="entry name" value="Transl_elongation_fac_P"/>
</dbReference>
<dbReference type="InterPro" id="IPR008991">
    <property type="entry name" value="Translation_prot_SH3-like_sf"/>
</dbReference>
<dbReference type="NCBIfam" id="TIGR00038">
    <property type="entry name" value="efp"/>
    <property type="match status" value="1"/>
</dbReference>
<dbReference type="NCBIfam" id="NF001810">
    <property type="entry name" value="PRK00529.1"/>
    <property type="match status" value="1"/>
</dbReference>
<dbReference type="PANTHER" id="PTHR30053">
    <property type="entry name" value="ELONGATION FACTOR P"/>
    <property type="match status" value="1"/>
</dbReference>
<dbReference type="PANTHER" id="PTHR30053:SF12">
    <property type="entry name" value="ELONGATION FACTOR P (EF-P) FAMILY PROTEIN"/>
    <property type="match status" value="1"/>
</dbReference>
<dbReference type="Pfam" id="PF01132">
    <property type="entry name" value="EFP"/>
    <property type="match status" value="1"/>
</dbReference>
<dbReference type="Pfam" id="PF08207">
    <property type="entry name" value="EFP_N"/>
    <property type="match status" value="1"/>
</dbReference>
<dbReference type="Pfam" id="PF09285">
    <property type="entry name" value="Elong-fact-P_C"/>
    <property type="match status" value="1"/>
</dbReference>
<dbReference type="PIRSF" id="PIRSF005901">
    <property type="entry name" value="EF-P"/>
    <property type="match status" value="1"/>
</dbReference>
<dbReference type="SMART" id="SM01185">
    <property type="entry name" value="EFP"/>
    <property type="match status" value="1"/>
</dbReference>
<dbReference type="SMART" id="SM00841">
    <property type="entry name" value="Elong-fact-P_C"/>
    <property type="match status" value="1"/>
</dbReference>
<dbReference type="SUPFAM" id="SSF50249">
    <property type="entry name" value="Nucleic acid-binding proteins"/>
    <property type="match status" value="2"/>
</dbReference>
<dbReference type="SUPFAM" id="SSF50104">
    <property type="entry name" value="Translation proteins SH3-like domain"/>
    <property type="match status" value="1"/>
</dbReference>
<dbReference type="PROSITE" id="PS01275">
    <property type="entry name" value="EFP"/>
    <property type="match status" value="1"/>
</dbReference>
<organism>
    <name type="scientific">Synechococcus sp. (strain CC9902)</name>
    <dbReference type="NCBI Taxonomy" id="316279"/>
    <lineage>
        <taxon>Bacteria</taxon>
        <taxon>Bacillati</taxon>
        <taxon>Cyanobacteriota</taxon>
        <taxon>Cyanophyceae</taxon>
        <taxon>Synechococcales</taxon>
        <taxon>Synechococcaceae</taxon>
        <taxon>Synechococcus</taxon>
    </lineage>
</organism>
<name>EFP_SYNS9</name>
<comment type="function">
    <text evidence="1">Involved in peptide bond synthesis. Stimulates efficient translation and peptide-bond synthesis on native or reconstituted 70S ribosomes in vitro. Probably functions indirectly by altering the affinity of the ribosome for aminoacyl-tRNA, thus increasing their reactivity as acceptors for peptidyl transferase.</text>
</comment>
<comment type="pathway">
    <text evidence="1">Protein biosynthesis; polypeptide chain elongation.</text>
</comment>
<comment type="subcellular location">
    <subcellularLocation>
        <location evidence="1">Cytoplasm</location>
    </subcellularLocation>
</comment>
<comment type="similarity">
    <text evidence="1">Belongs to the elongation factor P family.</text>
</comment>
<reference key="1">
    <citation type="submission" date="2005-08" db="EMBL/GenBank/DDBJ databases">
        <title>Complete sequence of Synechococcus sp. CC9902.</title>
        <authorList>
            <person name="Copeland A."/>
            <person name="Lucas S."/>
            <person name="Lapidus A."/>
            <person name="Barry K."/>
            <person name="Detter J.C."/>
            <person name="Glavina T."/>
            <person name="Hammon N."/>
            <person name="Israni S."/>
            <person name="Pitluck S."/>
            <person name="Martinez M."/>
            <person name="Schmutz J."/>
            <person name="Larimer F."/>
            <person name="Land M."/>
            <person name="Kyrpides N."/>
            <person name="Ivanova N."/>
            <person name="Richardson P."/>
        </authorList>
    </citation>
    <scope>NUCLEOTIDE SEQUENCE [LARGE SCALE GENOMIC DNA]</scope>
    <source>
        <strain>CC9902</strain>
    </source>
</reference>